<organism>
    <name type="scientific">Homo sapiens</name>
    <name type="common">Human</name>
    <dbReference type="NCBI Taxonomy" id="9606"/>
    <lineage>
        <taxon>Eukaryota</taxon>
        <taxon>Metazoa</taxon>
        <taxon>Chordata</taxon>
        <taxon>Craniata</taxon>
        <taxon>Vertebrata</taxon>
        <taxon>Euteleostomi</taxon>
        <taxon>Mammalia</taxon>
        <taxon>Eutheria</taxon>
        <taxon>Euarchontoglires</taxon>
        <taxon>Primates</taxon>
        <taxon>Haplorrhini</taxon>
        <taxon>Catarrhini</taxon>
        <taxon>Hominidae</taxon>
        <taxon>Homo</taxon>
    </lineage>
</organism>
<keyword id="KW-0002">3D-structure</keyword>
<keyword id="KW-0225">Disease variant</keyword>
<keyword id="KW-0539">Nucleus</keyword>
<keyword id="KW-0597">Phosphoprotein</keyword>
<keyword id="KW-1267">Proteomics identification</keyword>
<keyword id="KW-1185">Reference proteome</keyword>
<keyword id="KW-0678">Repressor</keyword>
<keyword id="KW-0804">Transcription</keyword>
<keyword id="KW-0805">Transcription regulation</keyword>
<keyword id="KW-0832">Ubl conjugation</keyword>
<proteinExistence type="evidence at protein level"/>
<accession>Q719H9</accession>
<accession>A8K1F5</accession>
<feature type="chain" id="PRO_0000247144" description="BTB/POZ domain-containing protein KCTD1">
    <location>
        <begin position="1"/>
        <end position="257"/>
    </location>
</feature>
<feature type="domain" description="BTB">
    <location>
        <begin position="30"/>
        <end position="100"/>
    </location>
</feature>
<feature type="region of interest" description="Disordered" evidence="1">
    <location>
        <begin position="1"/>
        <end position="25"/>
    </location>
</feature>
<feature type="compositionally biased region" description="Polar residues" evidence="1">
    <location>
        <begin position="9"/>
        <end position="25"/>
    </location>
</feature>
<feature type="modified residue" description="Phosphoserine" evidence="10">
    <location>
        <position position="9"/>
    </location>
</feature>
<feature type="modified residue" description="Phosphoserine" evidence="10">
    <location>
        <position position="12"/>
    </location>
</feature>
<feature type="sequence variant" id="VAR_069971" description="In SENS; dbSNP:rs587776998." evidence="5">
    <original>A</original>
    <variation>E</variation>
    <location>
        <position position="30"/>
    </location>
</feature>
<feature type="sequence variant" id="VAR_069972" description="In SENS; dbSNP:rs587776999." evidence="5">
    <original>P</original>
    <variation>L</variation>
    <location>
        <position position="31"/>
    </location>
</feature>
<feature type="sequence variant" id="VAR_069973" description="In SENS; dbSNP:rs587776999." evidence="5">
    <original>P</original>
    <variation>R</variation>
    <location>
        <position position="31"/>
    </location>
</feature>
<feature type="sequence variant" id="VAR_069974" description="In SENS." evidence="5">
    <original>P</original>
    <variation>S</variation>
    <location>
        <position position="31"/>
    </location>
</feature>
<feature type="sequence variant" id="VAR_069975" description="In SENS; dbSNP:rs587777001." evidence="5">
    <original>H</original>
    <variation>P</variation>
    <location>
        <position position="33"/>
    </location>
</feature>
<feature type="sequence variant" id="VAR_069976" description="In SENS; dbSNP:rs587777000." evidence="5">
    <original>H</original>
    <variation>Q</variation>
    <location>
        <position position="33"/>
    </location>
</feature>
<feature type="sequence variant" id="VAR_069977" description="In SENS; increased protein aggregation; the mutant protein sequesters wild-type KCTD1 or KCTD15 into amyloid-like aggregates; dbSNP:rs587777003." evidence="5 6">
    <original>G</original>
    <variation>D</variation>
    <location>
        <position position="62"/>
    </location>
</feature>
<feature type="sequence variant" id="VAR_069978" description="In SENS; increased protein aggregation; the mutant protein sequesters wild-type KCTD1 or KCTD15 into amyloid-like aggregates; dbSNP:rs587777002." evidence="5 6">
    <original>H</original>
    <variation>P</variation>
    <location>
        <position position="74"/>
    </location>
</feature>
<feature type="sequence variant" id="VAR_049722" description="In dbSNP:rs491684.">
    <original>L</original>
    <variation>W</variation>
    <location>
        <position position="107"/>
    </location>
</feature>
<feature type="sequence conflict" description="In Ref. 2; BAF82559." evidence="8" ref="2">
    <original>E</original>
    <variation>K</variation>
    <location>
        <position position="141"/>
    </location>
</feature>
<feature type="strand" evidence="12">
    <location>
        <begin position="33"/>
        <end position="35"/>
    </location>
</feature>
<feature type="strand" evidence="12">
    <location>
        <begin position="37"/>
        <end position="39"/>
    </location>
</feature>
<feature type="strand" evidence="12">
    <location>
        <begin position="41"/>
        <end position="43"/>
    </location>
</feature>
<feature type="helix" evidence="12">
    <location>
        <begin position="45"/>
        <end position="48"/>
    </location>
</feature>
<feature type="helix" evidence="12">
    <location>
        <begin position="55"/>
        <end position="60"/>
    </location>
</feature>
<feature type="strand" evidence="11">
    <location>
        <begin position="61"/>
        <end position="64"/>
    </location>
</feature>
<feature type="strand" evidence="11">
    <location>
        <begin position="67"/>
        <end position="69"/>
    </location>
</feature>
<feature type="turn" evidence="11">
    <location>
        <begin position="70"/>
        <end position="73"/>
    </location>
</feature>
<feature type="strand" evidence="12">
    <location>
        <begin position="74"/>
        <end position="76"/>
    </location>
</feature>
<feature type="helix" evidence="12">
    <location>
        <begin position="81"/>
        <end position="93"/>
    </location>
</feature>
<feature type="helix" evidence="12">
    <location>
        <begin position="105"/>
        <end position="114"/>
    </location>
</feature>
<feature type="helix" evidence="12">
    <location>
        <begin position="118"/>
        <end position="124"/>
    </location>
</feature>
<feature type="turn" evidence="11">
    <location>
        <begin position="129"/>
        <end position="131"/>
    </location>
</feature>
<feature type="turn" evidence="13">
    <location>
        <begin position="134"/>
        <end position="136"/>
    </location>
</feature>
<feature type="strand" evidence="13">
    <location>
        <begin position="141"/>
        <end position="160"/>
    </location>
</feature>
<feature type="helix" evidence="13">
    <location>
        <begin position="161"/>
        <end position="167"/>
    </location>
</feature>
<feature type="strand" evidence="13">
    <location>
        <begin position="189"/>
        <end position="194"/>
    </location>
</feature>
<feature type="helix" evidence="13">
    <location>
        <begin position="195"/>
        <end position="198"/>
    </location>
</feature>
<feature type="helix" evidence="13">
    <location>
        <begin position="203"/>
        <end position="212"/>
    </location>
</feature>
<feature type="strand" evidence="13">
    <location>
        <begin position="216"/>
        <end position="224"/>
    </location>
</feature>
<feature type="strand" evidence="13">
    <location>
        <begin position="226"/>
        <end position="237"/>
    </location>
</feature>
<feature type="strand" evidence="13">
    <location>
        <begin position="246"/>
        <end position="248"/>
    </location>
</feature>
<protein>
    <recommendedName>
        <fullName>BTB/POZ domain-containing protein KCTD1</fullName>
    </recommendedName>
    <alternativeName>
        <fullName>Potassium channel tetramerization domain-containing protein 1</fullName>
    </alternativeName>
</protein>
<dbReference type="EMBL" id="AF542549">
    <property type="protein sequence ID" value="AAQ09532.1"/>
    <property type="molecule type" value="mRNA"/>
</dbReference>
<dbReference type="EMBL" id="AK289870">
    <property type="protein sequence ID" value="BAF82559.1"/>
    <property type="molecule type" value="mRNA"/>
</dbReference>
<dbReference type="EMBL" id="BC063652">
    <property type="protein sequence ID" value="AAH63652.1"/>
    <property type="molecule type" value="mRNA"/>
</dbReference>
<dbReference type="CCDS" id="CCDS11888.1"/>
<dbReference type="RefSeq" id="NP_001129677.1">
    <property type="nucleotide sequence ID" value="NM_001136205.2"/>
</dbReference>
<dbReference type="RefSeq" id="NP_001136202.1">
    <property type="nucleotide sequence ID" value="NM_001142730.2"/>
</dbReference>
<dbReference type="RefSeq" id="NP_001245150.1">
    <property type="nucleotide sequence ID" value="NM_001258221.2"/>
</dbReference>
<dbReference type="RefSeq" id="NP_001338372.1">
    <property type="nucleotide sequence ID" value="NM_001351443.1"/>
</dbReference>
<dbReference type="RefSeq" id="NP_945342.1">
    <property type="nucleotide sequence ID" value="NM_198991.4"/>
</dbReference>
<dbReference type="RefSeq" id="XP_016881197.1">
    <property type="nucleotide sequence ID" value="XM_017025708.1"/>
</dbReference>
<dbReference type="PDB" id="5BXB">
    <property type="method" value="X-ray"/>
    <property type="resolution" value="2.17 A"/>
    <property type="chains" value="A/B/C/D/E/F/G/H/I/J=29-132"/>
</dbReference>
<dbReference type="PDB" id="5BXD">
    <property type="method" value="X-ray"/>
    <property type="resolution" value="1.80 A"/>
    <property type="chains" value="A/B/C/D/E=29-132"/>
</dbReference>
<dbReference type="PDB" id="6S4L">
    <property type="method" value="X-ray"/>
    <property type="resolution" value="2.42 A"/>
    <property type="chains" value="A/B/C/D/E=28-257"/>
</dbReference>
<dbReference type="PDBsum" id="5BXB"/>
<dbReference type="PDBsum" id="5BXD"/>
<dbReference type="PDBsum" id="6S4L"/>
<dbReference type="SMR" id="Q719H9"/>
<dbReference type="BioGRID" id="129804">
    <property type="interactions" value="38"/>
</dbReference>
<dbReference type="FunCoup" id="Q719H9">
    <property type="interactions" value="1719"/>
</dbReference>
<dbReference type="IntAct" id="Q719H9">
    <property type="interactions" value="24"/>
</dbReference>
<dbReference type="MINT" id="Q719H9"/>
<dbReference type="STRING" id="9606.ENSP00000384367"/>
<dbReference type="iPTMnet" id="Q719H9"/>
<dbReference type="PhosphoSitePlus" id="Q719H9"/>
<dbReference type="BioMuta" id="KCTD1"/>
<dbReference type="DMDM" id="74738338"/>
<dbReference type="jPOST" id="Q719H9"/>
<dbReference type="MassIVE" id="Q719H9"/>
<dbReference type="PaxDb" id="9606-ENSP00000384367"/>
<dbReference type="PeptideAtlas" id="Q719H9"/>
<dbReference type="ProteomicsDB" id="68593"/>
<dbReference type="Pumba" id="Q719H9"/>
<dbReference type="Antibodypedia" id="54340">
    <property type="antibodies" value="100 antibodies from 13 providers"/>
</dbReference>
<dbReference type="DNASU" id="284252"/>
<dbReference type="Ensembl" id="ENST00000317932.11">
    <property type="protein sequence ID" value="ENSP00000314831.7"/>
    <property type="gene ID" value="ENSG00000134504.14"/>
</dbReference>
<dbReference type="Ensembl" id="ENST00000408011.7">
    <property type="protein sequence ID" value="ENSP00000384367.3"/>
    <property type="gene ID" value="ENSG00000134504.14"/>
</dbReference>
<dbReference type="Ensembl" id="ENST00000417602.5">
    <property type="protein sequence ID" value="ENSP00000408405.2"/>
    <property type="gene ID" value="ENSG00000134504.14"/>
</dbReference>
<dbReference type="Ensembl" id="ENST00000579973.5">
    <property type="protein sequence ID" value="ENSP00000464170.1"/>
    <property type="gene ID" value="ENSG00000134504.14"/>
</dbReference>
<dbReference type="GeneID" id="284252"/>
<dbReference type="KEGG" id="hsa:284252"/>
<dbReference type="UCSC" id="uc002kvw.6">
    <property type="organism name" value="human"/>
</dbReference>
<dbReference type="AGR" id="HGNC:18249"/>
<dbReference type="CTD" id="284252"/>
<dbReference type="DisGeNET" id="284252"/>
<dbReference type="GeneCards" id="KCTD1"/>
<dbReference type="HGNC" id="HGNC:18249">
    <property type="gene designation" value="KCTD1"/>
</dbReference>
<dbReference type="HPA" id="ENSG00000134504">
    <property type="expression patterns" value="Low tissue specificity"/>
</dbReference>
<dbReference type="MalaCards" id="KCTD1"/>
<dbReference type="MIM" id="181270">
    <property type="type" value="phenotype"/>
</dbReference>
<dbReference type="MIM" id="613420">
    <property type="type" value="gene"/>
</dbReference>
<dbReference type="neXtProt" id="NX_Q719H9"/>
<dbReference type="OpenTargets" id="ENSG00000134504"/>
<dbReference type="Orphanet" id="2036">
    <property type="disease" value="Scalp-ear-nipple syndrome"/>
</dbReference>
<dbReference type="PharmGKB" id="PA30082"/>
<dbReference type="VEuPathDB" id="HostDB:ENSG00000134504"/>
<dbReference type="eggNOG" id="KOG2723">
    <property type="taxonomic scope" value="Eukaryota"/>
</dbReference>
<dbReference type="GeneTree" id="ENSGT00940000156453"/>
<dbReference type="InParanoid" id="Q719H9"/>
<dbReference type="OMA" id="YFDIVPM"/>
<dbReference type="OrthoDB" id="2414723at2759"/>
<dbReference type="PAN-GO" id="Q719H9">
    <property type="GO annotations" value="4 GO annotations based on evolutionary models"/>
</dbReference>
<dbReference type="PhylomeDB" id="Q719H9"/>
<dbReference type="PathwayCommons" id="Q719H9"/>
<dbReference type="Reactome" id="R-HSA-8866904">
    <property type="pathway name" value="Negative regulation of activity of TFAP2 (AP-2) family transcription factors"/>
</dbReference>
<dbReference type="SignaLink" id="Q719H9"/>
<dbReference type="BioGRID-ORCS" id="284252">
    <property type="hits" value="22 hits in 1157 CRISPR screens"/>
</dbReference>
<dbReference type="ChiTaRS" id="KCTD1">
    <property type="organism name" value="human"/>
</dbReference>
<dbReference type="EvolutionaryTrace" id="Q719H9"/>
<dbReference type="GenomeRNAi" id="284252"/>
<dbReference type="Pharos" id="Q719H9">
    <property type="development level" value="Tbio"/>
</dbReference>
<dbReference type="PRO" id="PR:Q719H9"/>
<dbReference type="Proteomes" id="UP000005640">
    <property type="component" value="Chromosome 18"/>
</dbReference>
<dbReference type="RNAct" id="Q719H9">
    <property type="molecule type" value="protein"/>
</dbReference>
<dbReference type="Bgee" id="ENSG00000134504">
    <property type="expression patterns" value="Expressed in oviduct epithelium and 177 other cell types or tissues"/>
</dbReference>
<dbReference type="ExpressionAtlas" id="Q719H9">
    <property type="expression patterns" value="baseline and differential"/>
</dbReference>
<dbReference type="GO" id="GO:0005654">
    <property type="term" value="C:nucleoplasm"/>
    <property type="evidence" value="ECO:0000304"/>
    <property type="project" value="Reactome"/>
</dbReference>
<dbReference type="GO" id="GO:0005634">
    <property type="term" value="C:nucleus"/>
    <property type="evidence" value="ECO:0000314"/>
    <property type="project" value="UniProtKB"/>
</dbReference>
<dbReference type="GO" id="GO:0042802">
    <property type="term" value="F:identical protein binding"/>
    <property type="evidence" value="ECO:0000353"/>
    <property type="project" value="IntAct"/>
</dbReference>
<dbReference type="GO" id="GO:0003714">
    <property type="term" value="F:transcription corepressor activity"/>
    <property type="evidence" value="ECO:0000314"/>
    <property type="project" value="UniProtKB"/>
</dbReference>
<dbReference type="GO" id="GO:0008134">
    <property type="term" value="F:transcription factor binding"/>
    <property type="evidence" value="ECO:0000353"/>
    <property type="project" value="UniProtKB"/>
</dbReference>
<dbReference type="GO" id="GO:0045892">
    <property type="term" value="P:negative regulation of DNA-templated transcription"/>
    <property type="evidence" value="ECO:0000314"/>
    <property type="project" value="UniProtKB"/>
</dbReference>
<dbReference type="GO" id="GO:0051260">
    <property type="term" value="P:protein homooligomerization"/>
    <property type="evidence" value="ECO:0007669"/>
    <property type="project" value="InterPro"/>
</dbReference>
<dbReference type="CDD" id="cd18387">
    <property type="entry name" value="BTB_POZ_KCTD1"/>
    <property type="match status" value="1"/>
</dbReference>
<dbReference type="FunFam" id="3.30.710.10:FF:000003">
    <property type="entry name" value="BTB/POZ domain-containing protein KCTD6 isoform X2"/>
    <property type="match status" value="1"/>
</dbReference>
<dbReference type="Gene3D" id="3.30.710.10">
    <property type="entry name" value="Potassium Channel Kv1.1, Chain A"/>
    <property type="match status" value="1"/>
</dbReference>
<dbReference type="InterPro" id="IPR000210">
    <property type="entry name" value="BTB/POZ_dom"/>
</dbReference>
<dbReference type="InterPro" id="IPR048599">
    <property type="entry name" value="BTB_POZ_KCTD1"/>
</dbReference>
<dbReference type="InterPro" id="IPR048595">
    <property type="entry name" value="KCTD1-15-like_C"/>
</dbReference>
<dbReference type="InterPro" id="IPR011333">
    <property type="entry name" value="SKP1/BTB/POZ_sf"/>
</dbReference>
<dbReference type="InterPro" id="IPR003131">
    <property type="entry name" value="T1-type_BTB"/>
</dbReference>
<dbReference type="PANTHER" id="PTHR14499:SF65">
    <property type="entry name" value="BTB_POZ DOMAIN-CONTAINING PROTEIN KCTD1"/>
    <property type="match status" value="1"/>
</dbReference>
<dbReference type="PANTHER" id="PTHR14499">
    <property type="entry name" value="POTASSIUM CHANNEL TETRAMERIZATION DOMAIN-CONTAINING"/>
    <property type="match status" value="1"/>
</dbReference>
<dbReference type="Pfam" id="PF02214">
    <property type="entry name" value="BTB_2"/>
    <property type="match status" value="1"/>
</dbReference>
<dbReference type="Pfam" id="PF20871">
    <property type="entry name" value="KCTD1-15_CTD"/>
    <property type="match status" value="1"/>
</dbReference>
<dbReference type="SMART" id="SM00225">
    <property type="entry name" value="BTB"/>
    <property type="match status" value="1"/>
</dbReference>
<dbReference type="SUPFAM" id="SSF54695">
    <property type="entry name" value="POZ domain"/>
    <property type="match status" value="1"/>
</dbReference>
<name>KCTD1_HUMAN</name>
<evidence type="ECO:0000256" key="1">
    <source>
        <dbReference type="SAM" id="MobiDB-lite"/>
    </source>
</evidence>
<evidence type="ECO:0000269" key="2">
    <source>
    </source>
</evidence>
<evidence type="ECO:0000269" key="3">
    <source>
    </source>
</evidence>
<evidence type="ECO:0000269" key="4">
    <source>
    </source>
</evidence>
<evidence type="ECO:0000269" key="5">
    <source>
    </source>
</evidence>
<evidence type="ECO:0000269" key="6">
    <source>
    </source>
</evidence>
<evidence type="ECO:0000269" key="7">
    <source ref="10"/>
</evidence>
<evidence type="ECO:0000305" key="8"/>
<evidence type="ECO:0007744" key="9">
    <source>
        <dbReference type="PDB" id="6S4L"/>
    </source>
</evidence>
<evidence type="ECO:0007744" key="10">
    <source>
    </source>
</evidence>
<evidence type="ECO:0007829" key="11">
    <source>
        <dbReference type="PDB" id="5BXB"/>
    </source>
</evidence>
<evidence type="ECO:0007829" key="12">
    <source>
        <dbReference type="PDB" id="5BXD"/>
    </source>
</evidence>
<evidence type="ECO:0007829" key="13">
    <source>
        <dbReference type="PDB" id="6S4L"/>
    </source>
</evidence>
<comment type="function">
    <text evidence="3 4">May repress the transcriptional activity of AP-2 family members, including TFAP2A, TFAP2B and TFAP2C to various extent.</text>
</comment>
<comment type="subunit">
    <text evidence="4 6 7">Forms homopentamers (Ref.10). Interacts with KCTD15, probably forming heteropentamers depending on its abundance in a cell-type dependent manner (PubMed:38113115). Interacts with TFAP2A, TFAP2B and TFAP2C via the BTB domain (PubMed:19115315).</text>
</comment>
<comment type="interaction">
    <interactant intactId="EBI-9027502">
        <id>Q719H9</id>
    </interactant>
    <interactant intactId="EBI-6255981">
        <id>Q7L775</id>
        <label>EPM2AIP1</label>
    </interactant>
    <organismsDiffer>false</organismsDiffer>
    <experiments>3</experiments>
</comment>
<comment type="interaction">
    <interactant intactId="EBI-9027502">
        <id>Q719H9</id>
    </interactant>
    <interactant intactId="EBI-371892">
        <id>Q9Y3B2</id>
        <label>EXOSC1</label>
    </interactant>
    <organismsDiffer>false</organismsDiffer>
    <experiments>6</experiments>
</comment>
<comment type="interaction">
    <interactant intactId="EBI-9027502">
        <id>Q719H9</id>
    </interactant>
    <interactant intactId="EBI-9027502">
        <id>Q719H9</id>
        <label>KCTD1</label>
    </interactant>
    <organismsDiffer>false</organismsDiffer>
    <experiments>6</experiments>
</comment>
<comment type="interaction">
    <interactant intactId="EBI-9027502">
        <id>Q719H9</id>
    </interactant>
    <interactant intactId="EBI-715783">
        <id>Q96SI1</id>
        <label>KCTD15</label>
    </interactant>
    <organismsDiffer>false</organismsDiffer>
    <experiments>3</experiments>
</comment>
<comment type="interaction">
    <interactant intactId="EBI-9027502">
        <id>Q719H9</id>
    </interactant>
    <interactant intactId="EBI-12382297">
        <id>Q96SI1-2</id>
        <label>KCTD15</label>
    </interactant>
    <organismsDiffer>false</organismsDiffer>
    <experiments>6</experiments>
</comment>
<comment type="interaction">
    <interactant intactId="EBI-9027502">
        <id>Q719H9</id>
    </interactant>
    <interactant intactId="EBI-8639312">
        <id>P25800</id>
        <label>LMO1</label>
    </interactant>
    <organismsDiffer>false</organismsDiffer>
    <experiments>3</experiments>
</comment>
<comment type="interaction">
    <interactant intactId="EBI-9027502">
        <id>Q719H9</id>
    </interactant>
    <interactant intactId="EBI-742259">
        <id>Q8TAP4</id>
        <label>LMO3</label>
    </interactant>
    <organismsDiffer>false</organismsDiffer>
    <experiments>3</experiments>
</comment>
<comment type="interaction">
    <interactant intactId="EBI-9027502">
        <id>Q719H9</id>
    </interactant>
    <interactant intactId="EBI-11742507">
        <id>Q8TAP4-4</id>
        <label>LMO3</label>
    </interactant>
    <organismsDiffer>false</organismsDiffer>
    <experiments>3</experiments>
</comment>
<comment type="interaction">
    <interactant intactId="EBI-9027502">
        <id>Q719H9</id>
    </interactant>
    <interactant intactId="EBI-739832">
        <id>Q8TBB1</id>
        <label>LNX1</label>
    </interactant>
    <organismsDiffer>false</organismsDiffer>
    <experiments>7</experiments>
</comment>
<comment type="interaction">
    <interactant intactId="EBI-9027502">
        <id>Q719H9</id>
    </interactant>
    <interactant intactId="EBI-399257">
        <id>Q15014</id>
        <label>MORF4L2</label>
    </interactant>
    <organismsDiffer>false</organismsDiffer>
    <experiments>3</experiments>
</comment>
<comment type="interaction">
    <interactant intactId="EBI-9027502">
        <id>Q719H9</id>
    </interactant>
    <interactant intactId="EBI-741158">
        <id>Q96HA8</id>
        <label>NTAQ1</label>
    </interactant>
    <organismsDiffer>false</organismsDiffer>
    <experiments>4</experiments>
</comment>
<comment type="interaction">
    <interactant intactId="EBI-9027502">
        <id>Q719H9</id>
    </interactant>
    <interactant intactId="EBI-79165">
        <id>Q9NRD5</id>
        <label>PICK1</label>
    </interactant>
    <organismsDiffer>false</organismsDiffer>
    <experiments>3</experiments>
</comment>
<comment type="interaction">
    <interactant intactId="EBI-9027502">
        <id>Q719H9</id>
    </interactant>
    <interactant intactId="EBI-1055079">
        <id>O15160</id>
        <label>POLR1C</label>
    </interactant>
    <organismsDiffer>false</organismsDiffer>
    <experiments>6</experiments>
</comment>
<comment type="interaction">
    <interactant intactId="EBI-9027502">
        <id>Q719H9</id>
    </interactant>
    <interactant intactId="EBI-1383852">
        <id>P54646</id>
        <label>PRKAA2</label>
    </interactant>
    <organismsDiffer>false</organismsDiffer>
    <experiments>3</experiments>
</comment>
<comment type="interaction">
    <interactant intactId="EBI-9027502">
        <id>Q719H9</id>
    </interactant>
    <interactant intactId="EBI-359352">
        <id>P25786</id>
        <label>PSMA1</label>
    </interactant>
    <organismsDiffer>false</organismsDiffer>
    <experiments>3</experiments>
</comment>
<comment type="interaction">
    <interactant intactId="EBI-9027502">
        <id>Q719H9</id>
    </interactant>
    <interactant intactId="EBI-727004">
        <id>O00560</id>
        <label>SDCBP</label>
    </interactant>
    <organismsDiffer>false</organismsDiffer>
    <experiments>6</experiments>
</comment>
<comment type="interaction">
    <interactant intactId="EBI-9027502">
        <id>Q719H9</id>
    </interactant>
    <interactant intactId="EBI-12029034">
        <id>Q96PF1</id>
        <label>TGM7</label>
    </interactant>
    <organismsDiffer>false</organismsDiffer>
    <experiments>3</experiments>
</comment>
<comment type="interaction">
    <interactant intactId="EBI-9027502">
        <id>Q719H9</id>
    </interactant>
    <interactant intactId="EBI-5663373">
        <id>P0DI81</id>
        <label>TRAPPC2</label>
    </interactant>
    <organismsDiffer>false</organismsDiffer>
    <experiments>3</experiments>
</comment>
<comment type="interaction">
    <interactant intactId="EBI-9027502">
        <id>Q719H9</id>
    </interactant>
    <interactant intactId="EBI-11961968">
        <id>P0DI81-3</id>
        <label>TRAPPC2</label>
    </interactant>
    <organismsDiffer>false</organismsDiffer>
    <experiments>3</experiments>
</comment>
<comment type="interaction">
    <interactant intactId="EBI-9027502">
        <id>Q719H9</id>
    </interactant>
    <interactant intactId="EBI-7353612">
        <id>P57075-2</id>
        <label>UBASH3A</label>
    </interactant>
    <organismsDiffer>false</organismsDiffer>
    <experiments>3</experiments>
</comment>
<comment type="interaction">
    <interactant intactId="EBI-9027502">
        <id>Q719H9</id>
    </interactant>
    <interactant intactId="EBI-10180829">
        <id>Q7KZS0</id>
        <label>UBE2I</label>
    </interactant>
    <organismsDiffer>false</organismsDiffer>
    <experiments>3</experiments>
</comment>
<comment type="interaction">
    <interactant intactId="EBI-9027502">
        <id>Q719H9</id>
    </interactant>
    <interactant intactId="EBI-739899">
        <id>P24278</id>
        <label>ZBTB25</label>
    </interactant>
    <organismsDiffer>false</organismsDiffer>
    <experiments>3</experiments>
</comment>
<comment type="subcellular location">
    <subcellularLocation>
        <location evidence="3 6">Nucleus</location>
    </subcellularLocation>
</comment>
<comment type="tissue specificity">
    <text evidence="3">Expressed in mammary gland, kidney, brain and ovary.</text>
</comment>
<comment type="PTM">
    <text evidence="2">Sumoylated.</text>
</comment>
<comment type="disease" evidence="5 6">
    <disease id="DI-03827">
        <name>Scalp-ear-nipple syndrome</name>
        <acronym>SENS</acronym>
        <description>A disease characterized by aplasia cutis congenita of the scalp, breast anomalies that range from hypothelia or athelia to amastia, and minor anomalies of the external ears. Less frequent clinical characteristics include nail dystrophy, dental anomalies, cutaneous syndactyly of the digits, and renal malformations. Penetrance appears to be high, although there is substantial variable expressivity within families.</description>
        <dbReference type="MIM" id="181270"/>
    </disease>
    <text>The disease is caused by variants affecting the gene represented in this entry.</text>
</comment>
<sequence>MSRPLITRSPASPLNNQGIPTPAQLTKSNAPVHIDVGGHMYTSSLATLTKYPESRIGRLFDGTEPIVLDSLKQHYFIDRDGQMFRYILNFLRTSKLLIPDDFKDYTLLYEEAKYFQLQPMLLEMERWKQDRETGRFSRPCECLVVRVAPDLGERITLSGDKSLIEEVFPEIGDVMCNSVNAGWNHDSTHVIRFPLNGYCHLNSVQVLERLQQRGFEIVGSCGGGVDSSQFSEYVLRRELRRTPRVPSVIRIKQEPLD</sequence>
<reference key="1">
    <citation type="submission" date="2002-07" db="EMBL/GenBank/DDBJ databases">
        <title>Cloning and characterization of a novel human gene, potassium channel tetramerization domain containing 1 (KCTD1).</title>
        <authorList>
            <person name="Zhang D.L."/>
            <person name="Cai J.J."/>
            <person name="Ma D.L."/>
        </authorList>
    </citation>
    <scope>NUCLEOTIDE SEQUENCE [MRNA]</scope>
</reference>
<reference key="2">
    <citation type="journal article" date="2004" name="Nat. Genet.">
        <title>Complete sequencing and characterization of 21,243 full-length human cDNAs.</title>
        <authorList>
            <person name="Ota T."/>
            <person name="Suzuki Y."/>
            <person name="Nishikawa T."/>
            <person name="Otsuki T."/>
            <person name="Sugiyama T."/>
            <person name="Irie R."/>
            <person name="Wakamatsu A."/>
            <person name="Hayashi K."/>
            <person name="Sato H."/>
            <person name="Nagai K."/>
            <person name="Kimura K."/>
            <person name="Makita H."/>
            <person name="Sekine M."/>
            <person name="Obayashi M."/>
            <person name="Nishi T."/>
            <person name="Shibahara T."/>
            <person name="Tanaka T."/>
            <person name="Ishii S."/>
            <person name="Yamamoto J."/>
            <person name="Saito K."/>
            <person name="Kawai Y."/>
            <person name="Isono Y."/>
            <person name="Nakamura Y."/>
            <person name="Nagahari K."/>
            <person name="Murakami K."/>
            <person name="Yasuda T."/>
            <person name="Iwayanagi T."/>
            <person name="Wagatsuma M."/>
            <person name="Shiratori A."/>
            <person name="Sudo H."/>
            <person name="Hosoiri T."/>
            <person name="Kaku Y."/>
            <person name="Kodaira H."/>
            <person name="Kondo H."/>
            <person name="Sugawara M."/>
            <person name="Takahashi M."/>
            <person name="Kanda K."/>
            <person name="Yokoi T."/>
            <person name="Furuya T."/>
            <person name="Kikkawa E."/>
            <person name="Omura Y."/>
            <person name="Abe K."/>
            <person name="Kamihara K."/>
            <person name="Katsuta N."/>
            <person name="Sato K."/>
            <person name="Tanikawa M."/>
            <person name="Yamazaki M."/>
            <person name="Ninomiya K."/>
            <person name="Ishibashi T."/>
            <person name="Yamashita H."/>
            <person name="Murakawa K."/>
            <person name="Fujimori K."/>
            <person name="Tanai H."/>
            <person name="Kimata M."/>
            <person name="Watanabe M."/>
            <person name="Hiraoka S."/>
            <person name="Chiba Y."/>
            <person name="Ishida S."/>
            <person name="Ono Y."/>
            <person name="Takiguchi S."/>
            <person name="Watanabe S."/>
            <person name="Yosida M."/>
            <person name="Hotuta T."/>
            <person name="Kusano J."/>
            <person name="Kanehori K."/>
            <person name="Takahashi-Fujii A."/>
            <person name="Hara H."/>
            <person name="Tanase T.-O."/>
            <person name="Nomura Y."/>
            <person name="Togiya S."/>
            <person name="Komai F."/>
            <person name="Hara R."/>
            <person name="Takeuchi K."/>
            <person name="Arita M."/>
            <person name="Imose N."/>
            <person name="Musashino K."/>
            <person name="Yuuki H."/>
            <person name="Oshima A."/>
            <person name="Sasaki N."/>
            <person name="Aotsuka S."/>
            <person name="Yoshikawa Y."/>
            <person name="Matsunawa H."/>
            <person name="Ichihara T."/>
            <person name="Shiohata N."/>
            <person name="Sano S."/>
            <person name="Moriya S."/>
            <person name="Momiyama H."/>
            <person name="Satoh N."/>
            <person name="Takami S."/>
            <person name="Terashima Y."/>
            <person name="Suzuki O."/>
            <person name="Nakagawa S."/>
            <person name="Senoh A."/>
            <person name="Mizoguchi H."/>
            <person name="Goto Y."/>
            <person name="Shimizu F."/>
            <person name="Wakebe H."/>
            <person name="Hishigaki H."/>
            <person name="Watanabe T."/>
            <person name="Sugiyama A."/>
            <person name="Takemoto M."/>
            <person name="Kawakami B."/>
            <person name="Yamazaki M."/>
            <person name="Watanabe K."/>
            <person name="Kumagai A."/>
            <person name="Itakura S."/>
            <person name="Fukuzumi Y."/>
            <person name="Fujimori Y."/>
            <person name="Komiyama M."/>
            <person name="Tashiro H."/>
            <person name="Tanigami A."/>
            <person name="Fujiwara T."/>
            <person name="Ono T."/>
            <person name="Yamada K."/>
            <person name="Fujii Y."/>
            <person name="Ozaki K."/>
            <person name="Hirao M."/>
            <person name="Ohmori Y."/>
            <person name="Kawabata A."/>
            <person name="Hikiji T."/>
            <person name="Kobatake N."/>
            <person name="Inagaki H."/>
            <person name="Ikema Y."/>
            <person name="Okamoto S."/>
            <person name="Okitani R."/>
            <person name="Kawakami T."/>
            <person name="Noguchi S."/>
            <person name="Itoh T."/>
            <person name="Shigeta K."/>
            <person name="Senba T."/>
            <person name="Matsumura K."/>
            <person name="Nakajima Y."/>
            <person name="Mizuno T."/>
            <person name="Morinaga M."/>
            <person name="Sasaki M."/>
            <person name="Togashi T."/>
            <person name="Oyama M."/>
            <person name="Hata H."/>
            <person name="Watanabe M."/>
            <person name="Komatsu T."/>
            <person name="Mizushima-Sugano J."/>
            <person name="Satoh T."/>
            <person name="Shirai Y."/>
            <person name="Takahashi Y."/>
            <person name="Nakagawa K."/>
            <person name="Okumura K."/>
            <person name="Nagase T."/>
            <person name="Nomura N."/>
            <person name="Kikuchi H."/>
            <person name="Masuho Y."/>
            <person name="Yamashita R."/>
            <person name="Nakai K."/>
            <person name="Yada T."/>
            <person name="Nakamura Y."/>
            <person name="Ohara O."/>
            <person name="Isogai T."/>
            <person name="Sugano S."/>
        </authorList>
    </citation>
    <scope>NUCLEOTIDE SEQUENCE [LARGE SCALE MRNA]</scope>
    <source>
        <tissue>Caudate nucleus</tissue>
    </source>
</reference>
<reference key="3">
    <citation type="journal article" date="2004" name="Genome Res.">
        <title>The status, quality, and expansion of the NIH full-length cDNA project: the Mammalian Gene Collection (MGC).</title>
        <authorList>
            <consortium name="The MGC Project Team"/>
        </authorList>
    </citation>
    <scope>NUCLEOTIDE SEQUENCE [LARGE SCALE MRNA]</scope>
    <source>
        <tissue>Skin</tissue>
    </source>
</reference>
<reference key="4">
    <citation type="journal article" date="2005" name="J. Biol. Chem.">
        <title>Systematic identification and analysis of mammalian small ubiquitin-like modifier substrates.</title>
        <authorList>
            <person name="Gocke C.B."/>
            <person name="Yu H."/>
            <person name="Kang J."/>
        </authorList>
    </citation>
    <scope>SUMOYLATION</scope>
</reference>
<reference key="5">
    <citation type="journal article" date="2008" name="DNA Cell Biol.">
        <title>Characterization and expression of a human KCTD1 gene containing the BTB domain, which mediates transcriptional repression and homomeric interactions.</title>
        <authorList>
            <person name="Ding X.F."/>
            <person name="Luo C."/>
            <person name="Ren K.Q."/>
            <person name="Zhang J."/>
            <person name="Zhou J.L."/>
            <person name="Hu X."/>
            <person name="Liu R.S."/>
            <person name="Wang Y."/>
            <person name="Gao X."/>
            <person name="Zhang J."/>
        </authorList>
    </citation>
    <scope>FUNCTION</scope>
    <scope>HOMODIMERIZATION</scope>
    <scope>SUBCELLULAR LOCATION</scope>
    <scope>TISSUE SPECIFICITY</scope>
</reference>
<reference key="6">
    <citation type="journal article" date="2008" name="Proc. Natl. Acad. Sci. U.S.A.">
        <title>A quantitative atlas of mitotic phosphorylation.</title>
        <authorList>
            <person name="Dephoure N."/>
            <person name="Zhou C."/>
            <person name="Villen J."/>
            <person name="Beausoleil S.A."/>
            <person name="Bakalarski C.E."/>
            <person name="Elledge S.J."/>
            <person name="Gygi S.P."/>
        </authorList>
    </citation>
    <scope>PHOSPHORYLATION [LARGE SCALE ANALYSIS] AT SER-9 AND SER-12</scope>
    <scope>IDENTIFICATION BY MASS SPECTROMETRY [LARGE SCALE ANALYSIS]</scope>
    <source>
        <tissue>Cervix carcinoma</tissue>
    </source>
</reference>
<reference key="7">
    <citation type="journal article" date="2009" name="J. Cell. Biochem.">
        <title>The interaction of KCTD1 with transcription factor AP-2alpha inhibits its transactivation.</title>
        <authorList>
            <person name="Ding X."/>
            <person name="Luo C."/>
            <person name="Zhou J."/>
            <person name="Zhong Y."/>
            <person name="Hu X."/>
            <person name="Zhou F."/>
            <person name="Ren K."/>
            <person name="Gan L."/>
            <person name="He A."/>
            <person name="Zhu J."/>
            <person name="Gao X."/>
            <person name="Zhang J."/>
        </authorList>
    </citation>
    <scope>FUNCTION</scope>
    <scope>INTERACTION WITH TFAP2A; TFAP2B AND TFAP2C</scope>
</reference>
<reference key="8">
    <citation type="journal article" date="2013" name="J. Proteome Res.">
        <title>Toward a comprehensive characterization of a human cancer cell phosphoproteome.</title>
        <authorList>
            <person name="Zhou H."/>
            <person name="Di Palma S."/>
            <person name="Preisinger C."/>
            <person name="Peng M."/>
            <person name="Polat A.N."/>
            <person name="Heck A.J."/>
            <person name="Mohammed S."/>
        </authorList>
    </citation>
    <scope>IDENTIFICATION BY MASS SPECTROMETRY [LARGE SCALE ANALYSIS]</scope>
    <source>
        <tissue>Cervix carcinoma</tissue>
    </source>
</reference>
<reference key="9">
    <citation type="journal article" date="2023" name="J. Clin. Invest.">
        <title>KCTD1/KCTD15 complexes control ectodermal and neural crest cell functions, and their impairment causes aplasia cutis.</title>
        <authorList>
            <person name="Raymundo J.R."/>
            <person name="Zhang H."/>
            <person name="Smaldone G."/>
            <person name="Zhu W."/>
            <person name="Daly K.E."/>
            <person name="Glennon B.J."/>
            <person name="Pecoraro G."/>
            <person name="Salvatore M."/>
            <person name="Devine W.A."/>
            <person name="Lo C.W."/>
            <person name="Vitagliano L."/>
            <person name="Marneros A.G."/>
        </authorList>
    </citation>
    <scope>INTERACTION WITH KCTD15</scope>
    <scope>CHARACTERIZATION OF VARIANTS SENS ASP-62 AND PRO-74</scope>
    <scope>SUBCELLULAR LOCATION</scope>
</reference>
<reference evidence="9" key="10">
    <citation type="submission" date="2019-06" db="PDB data bank">
        <title>Structure of human KCTD1.</title>
        <authorList>
            <person name="Pinkas D.M."/>
            <person name="Bufton J.C."/>
            <person name="Fox A.E."/>
            <person name="Pike A.C.W."/>
            <person name="Newman J.A."/>
            <person name="Krojer T."/>
            <person name="Shrestha L."/>
            <person name="Burgess-Brown N.A."/>
            <person name="von Delft F."/>
            <person name="Arrowsmith C."/>
            <person name="Edwards A."/>
            <person name="Bountra C."/>
            <person name="Bullock A.N."/>
        </authorList>
    </citation>
    <scope>X-RAY CRYSTALLOGRAPHY (2.42 ANGSTROMS) OF 28-257</scope>
    <scope>SUBUNIT</scope>
</reference>
<reference key="11">
    <citation type="journal article" date="2013" name="Am. J. Hum. Genet.">
        <title>Mutations in KCTD1 cause scalp-ear-nipple syndrome.</title>
        <authorList>
            <person name="Marneros A.G."/>
            <person name="Beck A.E."/>
            <person name="Turner E.H."/>
            <person name="McMillin M.J."/>
            <person name="Edwards M.J."/>
            <person name="Field M."/>
            <person name="de Macena Sobreira N.L."/>
            <person name="Perez A.B."/>
            <person name="Fortes J.A."/>
            <person name="Lampe A.K."/>
            <person name="Giovannucci Uzielli M.L."/>
            <person name="Gordon C.T."/>
            <person name="Plessis G."/>
            <person name="Le Merrer M."/>
            <person name="Amiel J."/>
            <person name="Reichenberger E."/>
            <person name="Shively K.M."/>
            <person name="Cerrato F."/>
            <person name="Labow B.I."/>
            <person name="Tabor H.K."/>
            <person name="Smith J.D."/>
            <person name="Shendure J."/>
            <person name="Nickerson D.A."/>
            <person name="Bamshad M.J."/>
        </authorList>
    </citation>
    <scope>VARIANTS SENS GLU-30; ARG-31; LEU-31; SER-31; GLN-33; PRO-33; ASP-62 AND PRO-74</scope>
    <scope>INVOLVEMENT IN SENS</scope>
</reference>
<gene>
    <name type="primary">KCTD1</name>
    <name type="synonym">C18orf5</name>
</gene>